<gene>
    <name evidence="1" type="primary">xni</name>
    <name evidence="1" type="synonym">ygdG</name>
    <name type="ordered locus">SPA2836</name>
</gene>
<reference key="1">
    <citation type="journal article" date="2004" name="Nat. Genet.">
        <title>Comparison of genome degradation in Paratyphi A and Typhi, human-restricted serovars of Salmonella enterica that cause typhoid.</title>
        <authorList>
            <person name="McClelland M."/>
            <person name="Sanderson K.E."/>
            <person name="Clifton S.W."/>
            <person name="Latreille P."/>
            <person name="Porwollik S."/>
            <person name="Sabo A."/>
            <person name="Meyer R."/>
            <person name="Bieri T."/>
            <person name="Ozersky P."/>
            <person name="McLellan M."/>
            <person name="Harkins C.R."/>
            <person name="Wang C."/>
            <person name="Nguyen C."/>
            <person name="Berghoff A."/>
            <person name="Elliott G."/>
            <person name="Kohlberg S."/>
            <person name="Strong C."/>
            <person name="Du F."/>
            <person name="Carter J."/>
            <person name="Kremizki C."/>
            <person name="Layman D."/>
            <person name="Leonard S."/>
            <person name="Sun H."/>
            <person name="Fulton L."/>
            <person name="Nash W."/>
            <person name="Miner T."/>
            <person name="Minx P."/>
            <person name="Delehaunty K."/>
            <person name="Fronick C."/>
            <person name="Magrini V."/>
            <person name="Nhan M."/>
            <person name="Warren W."/>
            <person name="Florea L."/>
            <person name="Spieth J."/>
            <person name="Wilson R.K."/>
        </authorList>
    </citation>
    <scope>NUCLEOTIDE SEQUENCE [LARGE SCALE GENOMIC DNA]</scope>
    <source>
        <strain>ATCC 9150 / SARB42</strain>
    </source>
</reference>
<proteinExistence type="inferred from homology"/>
<feature type="chain" id="PRO_0000297870" description="Flap endonuclease Xni">
    <location>
        <begin position="1"/>
        <end position="251"/>
    </location>
</feature>
<feature type="domain" description="5'-3' exonuclease" evidence="1">
    <location>
        <begin position="160"/>
        <end position="249"/>
    </location>
</feature>
<feature type="region of interest" description="Interaction with DNA" evidence="1">
    <location>
        <begin position="184"/>
        <end position="189"/>
    </location>
</feature>
<feature type="binding site" evidence="1">
    <location>
        <position position="104"/>
    </location>
    <ligand>
        <name>Mg(2+)</name>
        <dbReference type="ChEBI" id="CHEBI:18420"/>
    </ligand>
</feature>
<feature type="binding site" evidence="1">
    <location>
        <position position="171"/>
    </location>
    <ligand>
        <name>K(+)</name>
        <dbReference type="ChEBI" id="CHEBI:29103"/>
    </ligand>
</feature>
<feature type="binding site" evidence="1">
    <location>
        <position position="172"/>
    </location>
    <ligand>
        <name>K(+)</name>
        <dbReference type="ChEBI" id="CHEBI:29103"/>
    </ligand>
</feature>
<feature type="binding site" evidence="1">
    <location>
        <position position="180"/>
    </location>
    <ligand>
        <name>K(+)</name>
        <dbReference type="ChEBI" id="CHEBI:29103"/>
    </ligand>
</feature>
<feature type="binding site" evidence="1">
    <location>
        <position position="182"/>
    </location>
    <ligand>
        <name>K(+)</name>
        <dbReference type="ChEBI" id="CHEBI:29103"/>
    </ligand>
</feature>
<feature type="binding site" evidence="1">
    <location>
        <position position="185"/>
    </location>
    <ligand>
        <name>K(+)</name>
        <dbReference type="ChEBI" id="CHEBI:29103"/>
    </ligand>
</feature>
<accession>Q5PEL3</accession>
<comment type="function">
    <text evidence="1">Has flap endonuclease activity. During DNA replication, flap endonucleases cleave the 5'-overhanging flap structure that is generated by displacement synthesis when DNA polymerase encounters the 5'-end of a downstream Okazaki fragment.</text>
</comment>
<comment type="cofactor">
    <cofactor evidence="1">
        <name>Mg(2+)</name>
        <dbReference type="ChEBI" id="CHEBI:18420"/>
    </cofactor>
    <text evidence="1">Binds 2 Mg(2+) per subunit. Only one magnesium ion has a direct interaction with the protein, the other interactions are indirect.</text>
</comment>
<comment type="cofactor">
    <cofactor evidence="1">
        <name>K(+)</name>
        <dbReference type="ChEBI" id="CHEBI:29103"/>
    </cofactor>
    <text evidence="1">Binds 1 K(+) per subunit. The potassium ion strongly increases the affinity for DNA.</text>
</comment>
<comment type="similarity">
    <text evidence="1">Belongs to the Xni family.</text>
</comment>
<evidence type="ECO:0000255" key="1">
    <source>
        <dbReference type="HAMAP-Rule" id="MF_01192"/>
    </source>
</evidence>
<name>XNI_SALPA</name>
<sequence>MAAHLLIVDALNLIRRIHAVQGSPCVETCQHALDQLIIHSQPTHAVAVFDDDARSSGWRHQRLPDYKAGRPPMPDDLHNEMPALRAAFEQRGVRCWASDGNEADDLAATLALKVTEAGHQATIVSTDKGYCQLLSPGLRIRDYFQKRWLDAPFIEKEFGVLPRQLPDYWGLAGISSSKVPGVAGIGPKSATQLLIQFQNLEGIYAHLDEVPEKWRKKLETHKEMAFLCRDIARLQTDLHIDGNLQQLRLVR</sequence>
<keyword id="KW-0238">DNA-binding</keyword>
<keyword id="KW-0255">Endonuclease</keyword>
<keyword id="KW-0378">Hydrolase</keyword>
<keyword id="KW-0460">Magnesium</keyword>
<keyword id="KW-0479">Metal-binding</keyword>
<keyword id="KW-0540">Nuclease</keyword>
<keyword id="KW-0630">Potassium</keyword>
<protein>
    <recommendedName>
        <fullName evidence="1">Flap endonuclease Xni</fullName>
        <shortName evidence="1">FEN</shortName>
        <ecNumber evidence="1">3.1.-.-</ecNumber>
    </recommendedName>
</protein>
<organism>
    <name type="scientific">Salmonella paratyphi A (strain ATCC 9150 / SARB42)</name>
    <dbReference type="NCBI Taxonomy" id="295319"/>
    <lineage>
        <taxon>Bacteria</taxon>
        <taxon>Pseudomonadati</taxon>
        <taxon>Pseudomonadota</taxon>
        <taxon>Gammaproteobacteria</taxon>
        <taxon>Enterobacterales</taxon>
        <taxon>Enterobacteriaceae</taxon>
        <taxon>Salmonella</taxon>
    </lineage>
</organism>
<dbReference type="EC" id="3.1.-.-" evidence="1"/>
<dbReference type="EMBL" id="CP000026">
    <property type="protein sequence ID" value="AAV78684.1"/>
    <property type="molecule type" value="Genomic_DNA"/>
</dbReference>
<dbReference type="SMR" id="Q5PEL3"/>
<dbReference type="KEGG" id="spt:SPA2836"/>
<dbReference type="HOGENOM" id="CLU_004675_1_2_6"/>
<dbReference type="Proteomes" id="UP000008185">
    <property type="component" value="Chromosome"/>
</dbReference>
<dbReference type="GO" id="GO:0008409">
    <property type="term" value="F:5'-3' exonuclease activity"/>
    <property type="evidence" value="ECO:0007669"/>
    <property type="project" value="InterPro"/>
</dbReference>
<dbReference type="GO" id="GO:0017108">
    <property type="term" value="F:5'-flap endonuclease activity"/>
    <property type="evidence" value="ECO:0007669"/>
    <property type="project" value="UniProtKB-UniRule"/>
</dbReference>
<dbReference type="GO" id="GO:0003677">
    <property type="term" value="F:DNA binding"/>
    <property type="evidence" value="ECO:0007669"/>
    <property type="project" value="UniProtKB-UniRule"/>
</dbReference>
<dbReference type="GO" id="GO:0000287">
    <property type="term" value="F:magnesium ion binding"/>
    <property type="evidence" value="ECO:0007669"/>
    <property type="project" value="UniProtKB-UniRule"/>
</dbReference>
<dbReference type="GO" id="GO:0030955">
    <property type="term" value="F:potassium ion binding"/>
    <property type="evidence" value="ECO:0007669"/>
    <property type="project" value="UniProtKB-UniRule"/>
</dbReference>
<dbReference type="GO" id="GO:0033567">
    <property type="term" value="P:DNA replication, Okazaki fragment processing"/>
    <property type="evidence" value="ECO:0007669"/>
    <property type="project" value="UniProtKB-UniRule"/>
</dbReference>
<dbReference type="CDD" id="cd09898">
    <property type="entry name" value="H3TH_53EXO"/>
    <property type="match status" value="1"/>
</dbReference>
<dbReference type="CDD" id="cd09859">
    <property type="entry name" value="PIN_53EXO"/>
    <property type="match status" value="1"/>
</dbReference>
<dbReference type="FunFam" id="1.10.150.20:FF:000003">
    <property type="entry name" value="DNA polymerase I"/>
    <property type="match status" value="1"/>
</dbReference>
<dbReference type="FunFam" id="3.40.50.1010:FF:000011">
    <property type="entry name" value="Flap endonuclease Xni"/>
    <property type="match status" value="1"/>
</dbReference>
<dbReference type="Gene3D" id="1.10.150.20">
    <property type="entry name" value="5' to 3' exonuclease, C-terminal subdomain"/>
    <property type="match status" value="1"/>
</dbReference>
<dbReference type="Gene3D" id="3.40.50.1010">
    <property type="entry name" value="5'-nuclease"/>
    <property type="match status" value="1"/>
</dbReference>
<dbReference type="HAMAP" id="MF_01192">
    <property type="entry name" value="Xni"/>
    <property type="match status" value="1"/>
</dbReference>
<dbReference type="InterPro" id="IPR020046">
    <property type="entry name" value="5-3_exonucl_a-hlix_arch_N"/>
</dbReference>
<dbReference type="InterPro" id="IPR002421">
    <property type="entry name" value="5-3_exonuclease"/>
</dbReference>
<dbReference type="InterPro" id="IPR036279">
    <property type="entry name" value="5-3_exonuclease_C_sf"/>
</dbReference>
<dbReference type="InterPro" id="IPR020045">
    <property type="entry name" value="DNA_polI_H3TH"/>
</dbReference>
<dbReference type="InterPro" id="IPR038969">
    <property type="entry name" value="FEN"/>
</dbReference>
<dbReference type="InterPro" id="IPR008918">
    <property type="entry name" value="HhH2"/>
</dbReference>
<dbReference type="InterPro" id="IPR029060">
    <property type="entry name" value="PIN-like_dom_sf"/>
</dbReference>
<dbReference type="InterPro" id="IPR022895">
    <property type="entry name" value="Xni"/>
</dbReference>
<dbReference type="NCBIfam" id="NF007017">
    <property type="entry name" value="PRK09482.1"/>
    <property type="match status" value="1"/>
</dbReference>
<dbReference type="PANTHER" id="PTHR42646:SF2">
    <property type="entry name" value="5'-3' EXONUCLEASE FAMILY PROTEIN"/>
    <property type="match status" value="1"/>
</dbReference>
<dbReference type="PANTHER" id="PTHR42646">
    <property type="entry name" value="FLAP ENDONUCLEASE XNI"/>
    <property type="match status" value="1"/>
</dbReference>
<dbReference type="Pfam" id="PF01367">
    <property type="entry name" value="5_3_exonuc"/>
    <property type="match status" value="1"/>
</dbReference>
<dbReference type="Pfam" id="PF02739">
    <property type="entry name" value="5_3_exonuc_N"/>
    <property type="match status" value="1"/>
</dbReference>
<dbReference type="SMART" id="SM00475">
    <property type="entry name" value="53EXOc"/>
    <property type="match status" value="1"/>
</dbReference>
<dbReference type="SMART" id="SM00279">
    <property type="entry name" value="HhH2"/>
    <property type="match status" value="1"/>
</dbReference>
<dbReference type="SUPFAM" id="SSF47807">
    <property type="entry name" value="5' to 3' exonuclease, C-terminal subdomain"/>
    <property type="match status" value="1"/>
</dbReference>
<dbReference type="SUPFAM" id="SSF88723">
    <property type="entry name" value="PIN domain-like"/>
    <property type="match status" value="1"/>
</dbReference>